<accession>P37359</accession>
<accession>A0JNL9</accession>
<sequence>MDPETCPCPTGGSCTCSDPCKCEGCTCASSKKSCCSCCPAECEKCAKDCVCKGGEGAEAEEKKCSCCQ</sequence>
<comment type="function">
    <text>Binds heavy metals. Contains five zinc and one copper atoms per polypeptide chain and only a negligible amount of cadmium.</text>
</comment>
<comment type="tissue specificity">
    <text>Brain.</text>
</comment>
<comment type="similarity">
    <text evidence="4">Belongs to the metallothionein superfamily. Type 1 family.</text>
</comment>
<proteinExistence type="evidence at protein level"/>
<reference key="1">
    <citation type="journal article" date="1994" name="FEBS Lett.">
        <title>Isolation, primary structures and metal binding properties of neuronal growth inhibitory factor (GIF) from bovine and equine brain.</title>
        <authorList>
            <person name="Pountney D.L."/>
            <person name="Fundel S.M."/>
            <person name="Faller P."/>
            <person name="Birchler N.E."/>
            <person name="Hunziker P."/>
            <person name="Vasak M."/>
        </authorList>
    </citation>
    <scope>PROTEIN SEQUENCE</scope>
    <scope>ACETYLATION AT MET-1</scope>
    <source>
        <tissue>Brain</tissue>
    </source>
</reference>
<reference key="2">
    <citation type="submission" date="2006-10" db="EMBL/GenBank/DDBJ databases">
        <authorList>
            <consortium name="NIH - Mammalian Gene Collection (MGC) project"/>
        </authorList>
    </citation>
    <scope>NUCLEOTIDE SEQUENCE [LARGE SCALE MRNA]</scope>
    <source>
        <strain>Hereford</strain>
        <tissue>Fetal pons</tissue>
    </source>
</reference>
<protein>
    <recommendedName>
        <fullName>Metallothionein-3</fullName>
        <shortName>MT-3</shortName>
    </recommendedName>
    <alternativeName>
        <fullName>Growth inhibitory factor</fullName>
        <shortName>GIF</shortName>
    </alternativeName>
    <alternativeName>
        <fullName>Metallothionein-III</fullName>
        <shortName>MT-III</shortName>
    </alternativeName>
</protein>
<evidence type="ECO:0000250" key="1">
    <source>
        <dbReference type="UniProtKB" id="P02795"/>
    </source>
</evidence>
<evidence type="ECO:0000250" key="2">
    <source>
        <dbReference type="UniProtKB" id="P28184"/>
    </source>
</evidence>
<evidence type="ECO:0000269" key="3">
    <source>
    </source>
</evidence>
<evidence type="ECO:0000305" key="4"/>
<dbReference type="EMBL" id="BC126773">
    <property type="protein sequence ID" value="AAI26774.1"/>
    <property type="molecule type" value="mRNA"/>
</dbReference>
<dbReference type="PIR" id="S44391">
    <property type="entry name" value="S44391"/>
</dbReference>
<dbReference type="RefSeq" id="NP_001106775.1">
    <property type="nucleotide sequence ID" value="NM_001113304.2"/>
</dbReference>
<dbReference type="SMR" id="P37359"/>
<dbReference type="FunCoup" id="P37359">
    <property type="interactions" value="285"/>
</dbReference>
<dbReference type="STRING" id="9913.ENSBTAP00000022460"/>
<dbReference type="iPTMnet" id="P37359"/>
<dbReference type="PaxDb" id="9913-ENSBTAP00000022460"/>
<dbReference type="GeneID" id="613320"/>
<dbReference type="KEGG" id="bta:613320"/>
<dbReference type="CTD" id="4504"/>
<dbReference type="VEuPathDB" id="HostDB:ENSBTAG00000016886"/>
<dbReference type="eggNOG" id="KOG4738">
    <property type="taxonomic scope" value="Eukaryota"/>
</dbReference>
<dbReference type="HOGENOM" id="CLU_171204_2_0_1"/>
<dbReference type="InParanoid" id="P37359"/>
<dbReference type="OMA" id="CEDSCKC"/>
<dbReference type="Reactome" id="R-BTA-5661231">
    <property type="pathway name" value="Metallothioneins bind metals"/>
</dbReference>
<dbReference type="Proteomes" id="UP000009136">
    <property type="component" value="Chromosome 18"/>
</dbReference>
<dbReference type="Bgee" id="ENSBTAG00000016886">
    <property type="expression patterns" value="Expressed in temporal cortex and 90 other cell types or tissues"/>
</dbReference>
<dbReference type="GO" id="GO:0005737">
    <property type="term" value="C:cytoplasm"/>
    <property type="evidence" value="ECO:0000318"/>
    <property type="project" value="GO_Central"/>
</dbReference>
<dbReference type="GO" id="GO:0016234">
    <property type="term" value="C:inclusion body"/>
    <property type="evidence" value="ECO:0000250"/>
    <property type="project" value="UniProtKB"/>
</dbReference>
<dbReference type="GO" id="GO:0005634">
    <property type="term" value="C:nucleus"/>
    <property type="evidence" value="ECO:0000250"/>
    <property type="project" value="UniProtKB"/>
</dbReference>
<dbReference type="GO" id="GO:0048471">
    <property type="term" value="C:perinuclear region of cytoplasm"/>
    <property type="evidence" value="ECO:0000250"/>
    <property type="project" value="UniProtKB"/>
</dbReference>
<dbReference type="GO" id="GO:0008021">
    <property type="term" value="C:synaptic vesicle"/>
    <property type="evidence" value="ECO:0000250"/>
    <property type="project" value="UniProtKB"/>
</dbReference>
<dbReference type="GO" id="GO:0046870">
    <property type="term" value="F:cadmium ion binding"/>
    <property type="evidence" value="ECO:0000250"/>
    <property type="project" value="UniProtKB"/>
</dbReference>
<dbReference type="GO" id="GO:0005507">
    <property type="term" value="F:copper ion binding"/>
    <property type="evidence" value="ECO:0000250"/>
    <property type="project" value="UniProtKB"/>
</dbReference>
<dbReference type="GO" id="GO:0046872">
    <property type="term" value="F:metal ion binding"/>
    <property type="evidence" value="ECO:0000318"/>
    <property type="project" value="GO_Central"/>
</dbReference>
<dbReference type="GO" id="GO:0140487">
    <property type="term" value="F:metal ion sequestering activity"/>
    <property type="evidence" value="ECO:0000250"/>
    <property type="project" value="UniProtKB"/>
</dbReference>
<dbReference type="GO" id="GO:0030295">
    <property type="term" value="F:protein kinase activator activity"/>
    <property type="evidence" value="ECO:0000250"/>
    <property type="project" value="UniProtKB"/>
</dbReference>
<dbReference type="GO" id="GO:0008270">
    <property type="term" value="F:zinc ion binding"/>
    <property type="evidence" value="ECO:0000250"/>
    <property type="project" value="UniProtKB"/>
</dbReference>
<dbReference type="GO" id="GO:0032148">
    <property type="term" value="P:activation of protein kinase B activity"/>
    <property type="evidence" value="ECO:0000250"/>
    <property type="project" value="UniProtKB"/>
</dbReference>
<dbReference type="GO" id="GO:1990748">
    <property type="term" value="P:cellular detoxification"/>
    <property type="evidence" value="ECO:0000250"/>
    <property type="project" value="UniProtKB"/>
</dbReference>
<dbReference type="GO" id="GO:0071276">
    <property type="term" value="P:cellular response to cadmium ion"/>
    <property type="evidence" value="ECO:0000318"/>
    <property type="project" value="GO_Central"/>
</dbReference>
<dbReference type="GO" id="GO:0071280">
    <property type="term" value="P:cellular response to copper ion"/>
    <property type="evidence" value="ECO:0000318"/>
    <property type="project" value="GO_Central"/>
</dbReference>
<dbReference type="GO" id="GO:0071456">
    <property type="term" value="P:cellular response to hypoxia"/>
    <property type="evidence" value="ECO:0007669"/>
    <property type="project" value="Ensembl"/>
</dbReference>
<dbReference type="GO" id="GO:0034614">
    <property type="term" value="P:cellular response to reactive oxygen species"/>
    <property type="evidence" value="ECO:0000250"/>
    <property type="project" value="UniProtKB"/>
</dbReference>
<dbReference type="GO" id="GO:0071294">
    <property type="term" value="P:cellular response to zinc ion"/>
    <property type="evidence" value="ECO:0000318"/>
    <property type="project" value="GO_Central"/>
</dbReference>
<dbReference type="GO" id="GO:0071585">
    <property type="term" value="P:detoxification of cadmium ion"/>
    <property type="evidence" value="ECO:0007669"/>
    <property type="project" value="Ensembl"/>
</dbReference>
<dbReference type="GO" id="GO:0010273">
    <property type="term" value="P:detoxification of copper ion"/>
    <property type="evidence" value="ECO:0000318"/>
    <property type="project" value="GO_Central"/>
</dbReference>
<dbReference type="GO" id="GO:0006112">
    <property type="term" value="P:energy reserve metabolic process"/>
    <property type="evidence" value="ECO:0000250"/>
    <property type="project" value="UniProtKB"/>
</dbReference>
<dbReference type="GO" id="GO:0006882">
    <property type="term" value="P:intracellular zinc ion homeostasis"/>
    <property type="evidence" value="ECO:0000250"/>
    <property type="project" value="UniProtKB"/>
</dbReference>
<dbReference type="GO" id="GO:0033210">
    <property type="term" value="P:leptin-mediated signaling pathway"/>
    <property type="evidence" value="ECO:0000250"/>
    <property type="project" value="UniProtKB"/>
</dbReference>
<dbReference type="GO" id="GO:0030517">
    <property type="term" value="P:negative regulation of axon extension"/>
    <property type="evidence" value="ECO:0000250"/>
    <property type="project" value="UniProtKB"/>
</dbReference>
<dbReference type="GO" id="GO:0030308">
    <property type="term" value="P:negative regulation of cell growth"/>
    <property type="evidence" value="ECO:0000250"/>
    <property type="project" value="UniProtKB"/>
</dbReference>
<dbReference type="GO" id="GO:0043524">
    <property type="term" value="P:negative regulation of neuron apoptotic process"/>
    <property type="evidence" value="ECO:0000250"/>
    <property type="project" value="UniProtKB"/>
</dbReference>
<dbReference type="GO" id="GO:0051354">
    <property type="term" value="P:negative regulation of oxidoreductase activity"/>
    <property type="evidence" value="ECO:0000250"/>
    <property type="project" value="UniProtKB"/>
</dbReference>
<dbReference type="GO" id="GO:0045893">
    <property type="term" value="P:positive regulation of DNA-templated transcription"/>
    <property type="evidence" value="ECO:0000250"/>
    <property type="project" value="UniProtKB"/>
</dbReference>
<dbReference type="GO" id="GO:0070374">
    <property type="term" value="P:positive regulation of ERK1 and ERK2 cascade"/>
    <property type="evidence" value="ECO:0000250"/>
    <property type="project" value="UniProtKB"/>
</dbReference>
<dbReference type="GO" id="GO:0010628">
    <property type="term" value="P:positive regulation of gene expression"/>
    <property type="evidence" value="ECO:0000250"/>
    <property type="project" value="UniProtKB"/>
</dbReference>
<dbReference type="GO" id="GO:2000376">
    <property type="term" value="P:positive regulation of oxygen metabolic process"/>
    <property type="evidence" value="ECO:0000250"/>
    <property type="project" value="UniProtKB"/>
</dbReference>
<dbReference type="GO" id="GO:0001934">
    <property type="term" value="P:positive regulation of protein phosphorylation"/>
    <property type="evidence" value="ECO:0000250"/>
    <property type="project" value="UniProtKB"/>
</dbReference>
<dbReference type="GO" id="GO:0030949">
    <property type="term" value="P:positive regulation of vascular endothelial growth factor receptor signaling pathway"/>
    <property type="evidence" value="ECO:0000250"/>
    <property type="project" value="UniProtKB"/>
</dbReference>
<dbReference type="GO" id="GO:0050821">
    <property type="term" value="P:protein stabilization"/>
    <property type="evidence" value="ECO:0000250"/>
    <property type="project" value="UniProtKB"/>
</dbReference>
<dbReference type="GO" id="GO:0032095">
    <property type="term" value="P:regulation of response to food"/>
    <property type="evidence" value="ECO:0000250"/>
    <property type="project" value="UniProtKB"/>
</dbReference>
<dbReference type="GO" id="GO:0019430">
    <property type="term" value="P:removal of superoxide radicals"/>
    <property type="evidence" value="ECO:0000250"/>
    <property type="project" value="UniProtKB"/>
</dbReference>
<dbReference type="GO" id="GO:0001666">
    <property type="term" value="P:response to hypoxia"/>
    <property type="evidence" value="ECO:0000250"/>
    <property type="project" value="UniProtKB"/>
</dbReference>
<dbReference type="GO" id="GO:0006829">
    <property type="term" value="P:zinc ion transport"/>
    <property type="evidence" value="ECO:0000250"/>
    <property type="project" value="UniProtKB"/>
</dbReference>
<dbReference type="FunFam" id="4.10.10.10:FF:000001">
    <property type="entry name" value="Metallothionein"/>
    <property type="match status" value="1"/>
</dbReference>
<dbReference type="Gene3D" id="4.10.10.10">
    <property type="entry name" value="Metallothionein Isoform II"/>
    <property type="match status" value="1"/>
</dbReference>
<dbReference type="InterPro" id="IPR017854">
    <property type="entry name" value="Metalthion_dom_sf"/>
</dbReference>
<dbReference type="InterPro" id="IPR023587">
    <property type="entry name" value="Metalthion_dom_sf_vert"/>
</dbReference>
<dbReference type="InterPro" id="IPR000006">
    <property type="entry name" value="Metalthion_vert"/>
</dbReference>
<dbReference type="PANTHER" id="PTHR23299">
    <property type="entry name" value="METALLOTHIONEIN"/>
    <property type="match status" value="1"/>
</dbReference>
<dbReference type="PANTHER" id="PTHR23299:SF18">
    <property type="entry name" value="METALLOTHIONEIN-3"/>
    <property type="match status" value="1"/>
</dbReference>
<dbReference type="Pfam" id="PF00131">
    <property type="entry name" value="Metallothio"/>
    <property type="match status" value="1"/>
</dbReference>
<dbReference type="PRINTS" id="PR00860">
    <property type="entry name" value="MTVERTEBRATE"/>
</dbReference>
<dbReference type="SUPFAM" id="SSF57868">
    <property type="entry name" value="Metallothionein"/>
    <property type="match status" value="1"/>
</dbReference>
<organism>
    <name type="scientific">Bos taurus</name>
    <name type="common">Bovine</name>
    <dbReference type="NCBI Taxonomy" id="9913"/>
    <lineage>
        <taxon>Eukaryota</taxon>
        <taxon>Metazoa</taxon>
        <taxon>Chordata</taxon>
        <taxon>Craniata</taxon>
        <taxon>Vertebrata</taxon>
        <taxon>Euteleostomi</taxon>
        <taxon>Mammalia</taxon>
        <taxon>Eutheria</taxon>
        <taxon>Laurasiatheria</taxon>
        <taxon>Artiodactyla</taxon>
        <taxon>Ruminantia</taxon>
        <taxon>Pecora</taxon>
        <taxon>Bovidae</taxon>
        <taxon>Bovinae</taxon>
        <taxon>Bos</taxon>
    </lineage>
</organism>
<keyword id="KW-0007">Acetylation</keyword>
<keyword id="KW-0186">Copper</keyword>
<keyword id="KW-0903">Direct protein sequencing</keyword>
<keyword id="KW-0479">Metal-binding</keyword>
<keyword id="KW-0480">Metal-thiolate cluster</keyword>
<keyword id="KW-0597">Phosphoprotein</keyword>
<keyword id="KW-1185">Reference proteome</keyword>
<keyword id="KW-0862">Zinc</keyword>
<feature type="chain" id="PRO_0000197248" description="Metallothionein-3">
    <location>
        <begin position="1"/>
        <end position="68"/>
    </location>
</feature>
<feature type="region of interest" description="Beta">
    <location>
        <begin position="1"/>
        <end position="30"/>
    </location>
</feature>
<feature type="region of interest" description="Alpha">
    <location>
        <begin position="31"/>
        <end position="68"/>
    </location>
</feature>
<feature type="binding site" evidence="1">
    <location>
        <position position="6"/>
    </location>
    <ligand>
        <name>a divalent metal cation</name>
        <dbReference type="ChEBI" id="CHEBI:60240"/>
        <label>1</label>
        <note>in cluster B</note>
    </ligand>
</feature>
<feature type="binding site" evidence="1">
    <location>
        <position position="8"/>
    </location>
    <ligand>
        <name>a divalent metal cation</name>
        <dbReference type="ChEBI" id="CHEBI:60240"/>
        <label>1</label>
        <note>in cluster B</note>
    </ligand>
</feature>
<feature type="binding site" evidence="1">
    <location>
        <position position="8"/>
    </location>
    <ligand>
        <name>a divalent metal cation</name>
        <dbReference type="ChEBI" id="CHEBI:60240"/>
        <label>2</label>
        <note>in cluster B</note>
    </ligand>
</feature>
<feature type="binding site" evidence="1">
    <location>
        <position position="14"/>
    </location>
    <ligand>
        <name>a divalent metal cation</name>
        <dbReference type="ChEBI" id="CHEBI:60240"/>
        <label>2</label>
        <note>in cluster B</note>
    </ligand>
</feature>
<feature type="binding site" evidence="1">
    <location>
        <position position="16"/>
    </location>
    <ligand>
        <name>a divalent metal cation</name>
        <dbReference type="ChEBI" id="CHEBI:60240"/>
        <label>2</label>
        <note>in cluster B</note>
    </ligand>
</feature>
<feature type="binding site" evidence="1">
    <location>
        <position position="16"/>
    </location>
    <ligand>
        <name>a divalent metal cation</name>
        <dbReference type="ChEBI" id="CHEBI:60240"/>
        <label>3</label>
        <note>in cluster B</note>
    </ligand>
</feature>
<feature type="binding site" evidence="1">
    <location>
        <position position="20"/>
    </location>
    <ligand>
        <name>a divalent metal cation</name>
        <dbReference type="ChEBI" id="CHEBI:60240"/>
        <label>3</label>
        <note>in cluster B</note>
    </ligand>
</feature>
<feature type="binding site" evidence="1">
    <location>
        <position position="22"/>
    </location>
    <ligand>
        <name>a divalent metal cation</name>
        <dbReference type="ChEBI" id="CHEBI:60240"/>
        <label>1</label>
        <note>in cluster B</note>
    </ligand>
</feature>
<feature type="binding site" evidence="1">
    <location>
        <position position="25"/>
    </location>
    <ligand>
        <name>a divalent metal cation</name>
        <dbReference type="ChEBI" id="CHEBI:60240"/>
        <label>1</label>
        <note>in cluster B</note>
    </ligand>
</feature>
<feature type="binding site" evidence="1">
    <location>
        <position position="25"/>
    </location>
    <ligand>
        <name>a divalent metal cation</name>
        <dbReference type="ChEBI" id="CHEBI:60240"/>
        <label>3</label>
        <note>in cluster B</note>
    </ligand>
</feature>
<feature type="binding site" evidence="1">
    <location>
        <position position="27"/>
    </location>
    <ligand>
        <name>a divalent metal cation</name>
        <dbReference type="ChEBI" id="CHEBI:60240"/>
        <label>2</label>
        <note>in cluster B</note>
    </ligand>
</feature>
<feature type="binding site" evidence="1">
    <location>
        <position position="34"/>
    </location>
    <ligand>
        <name>a divalent metal cation</name>
        <dbReference type="ChEBI" id="CHEBI:60240"/>
        <label>4</label>
        <note>in cluster A</note>
    </ligand>
</feature>
<feature type="binding site" evidence="1">
    <location>
        <position position="35"/>
    </location>
    <ligand>
        <name>a divalent metal cation</name>
        <dbReference type="ChEBI" id="CHEBI:60240"/>
        <label>4</label>
        <note>in cluster A</note>
    </ligand>
</feature>
<feature type="binding site" evidence="1">
    <location>
        <position position="35"/>
    </location>
    <ligand>
        <name>a divalent metal cation</name>
        <dbReference type="ChEBI" id="CHEBI:60240"/>
        <label>5</label>
        <note>in cluster A</note>
    </ligand>
</feature>
<feature type="binding site" evidence="1">
    <location>
        <position position="37"/>
    </location>
    <ligand>
        <name>a divalent metal cation</name>
        <dbReference type="ChEBI" id="CHEBI:60240"/>
        <label>5</label>
        <note>in cluster A</note>
    </ligand>
</feature>
<feature type="binding site" evidence="1">
    <location>
        <position position="38"/>
    </location>
    <ligand>
        <name>a divalent metal cation</name>
        <dbReference type="ChEBI" id="CHEBI:60240"/>
        <label>5</label>
        <note>in cluster A</note>
    </ligand>
</feature>
<feature type="binding site" evidence="1">
    <location>
        <position position="38"/>
    </location>
    <ligand>
        <name>a divalent metal cation</name>
        <dbReference type="ChEBI" id="CHEBI:60240"/>
        <label>6</label>
        <note>in cluster A</note>
    </ligand>
</feature>
<feature type="binding site" evidence="1">
    <location>
        <position position="42"/>
    </location>
    <ligand>
        <name>a divalent metal cation</name>
        <dbReference type="ChEBI" id="CHEBI:60240"/>
        <label>6</label>
        <note>in cluster A</note>
    </ligand>
</feature>
<feature type="binding site" evidence="1">
    <location>
        <position position="45"/>
    </location>
    <ligand>
        <name>a divalent metal cation</name>
        <dbReference type="ChEBI" id="CHEBI:60240"/>
        <label>4</label>
        <note>in cluster A</note>
    </ligand>
</feature>
<feature type="binding site" evidence="1">
    <location>
        <position position="45"/>
    </location>
    <ligand>
        <name>a divalent metal cation</name>
        <dbReference type="ChEBI" id="CHEBI:60240"/>
        <label>6</label>
        <note>in cluster A</note>
    </ligand>
</feature>
<feature type="binding site" evidence="1">
    <location>
        <position position="49"/>
    </location>
    <ligand>
        <name>a divalent metal cation</name>
        <dbReference type="ChEBI" id="CHEBI:60240"/>
        <label>4</label>
        <note>in cluster A</note>
    </ligand>
</feature>
<feature type="binding site" evidence="1">
    <location>
        <position position="51"/>
    </location>
    <ligand>
        <name>a divalent metal cation</name>
        <dbReference type="ChEBI" id="CHEBI:60240"/>
        <label>5</label>
        <note>in cluster A</note>
    </ligand>
</feature>
<feature type="binding site" evidence="1">
    <location>
        <position position="51"/>
    </location>
    <ligand>
        <name>a divalent metal cation</name>
        <dbReference type="ChEBI" id="CHEBI:60240"/>
        <label>7</label>
        <note>in cluster A</note>
    </ligand>
</feature>
<feature type="binding site" evidence="1">
    <location>
        <position position="64"/>
    </location>
    <ligand>
        <name>a divalent metal cation</name>
        <dbReference type="ChEBI" id="CHEBI:60240"/>
        <label>7</label>
        <note>in cluster A</note>
    </ligand>
</feature>
<feature type="binding site" evidence="1">
    <location>
        <position position="66"/>
    </location>
    <ligand>
        <name>a divalent metal cation</name>
        <dbReference type="ChEBI" id="CHEBI:60240"/>
        <label>7</label>
        <note>in cluster A</note>
    </ligand>
</feature>
<feature type="binding site" evidence="1">
    <location>
        <position position="67"/>
    </location>
    <ligand>
        <name>a divalent metal cation</name>
        <dbReference type="ChEBI" id="CHEBI:60240"/>
        <label>6</label>
        <note>in cluster A</note>
    </ligand>
</feature>
<feature type="binding site" evidence="1">
    <location>
        <position position="67"/>
    </location>
    <ligand>
        <name>a divalent metal cation</name>
        <dbReference type="ChEBI" id="CHEBI:60240"/>
        <label>7</label>
        <note>in cluster A</note>
    </ligand>
</feature>
<feature type="modified residue" description="N-acetylmethionine" evidence="3">
    <location>
        <position position="1"/>
    </location>
</feature>
<feature type="modified residue" description="Phosphoserine" evidence="2">
    <location>
        <position position="33"/>
    </location>
</feature>
<feature type="sequence conflict" description="In Ref. 1; AA sequence." evidence="4" ref="1">
    <original>S</original>
    <variation>C</variation>
    <location>
        <position position="30"/>
    </location>
</feature>
<name>MT3_BOVIN</name>
<gene>
    <name type="primary">MT3</name>
</gene>